<accession>A0RM24</accession>
<protein>
    <recommendedName>
        <fullName evidence="1">Small ribosomal subunit protein uS14</fullName>
    </recommendedName>
    <alternativeName>
        <fullName evidence="2">30S ribosomal protein S14 type Z</fullName>
    </alternativeName>
</protein>
<keyword id="KW-0479">Metal-binding</keyword>
<keyword id="KW-0687">Ribonucleoprotein</keyword>
<keyword id="KW-0689">Ribosomal protein</keyword>
<keyword id="KW-0694">RNA-binding</keyword>
<keyword id="KW-0699">rRNA-binding</keyword>
<keyword id="KW-0862">Zinc</keyword>
<sequence>MAKKSMIAKAARKPKFSARGYTRCQICGRPHSVYKDFGICRVCLRKMANEGLIPGLKKASW</sequence>
<name>RS14Z_CAMFF</name>
<organism>
    <name type="scientific">Campylobacter fetus subsp. fetus (strain 82-40)</name>
    <dbReference type="NCBI Taxonomy" id="360106"/>
    <lineage>
        <taxon>Bacteria</taxon>
        <taxon>Pseudomonadati</taxon>
        <taxon>Campylobacterota</taxon>
        <taxon>Epsilonproteobacteria</taxon>
        <taxon>Campylobacterales</taxon>
        <taxon>Campylobacteraceae</taxon>
        <taxon>Campylobacter</taxon>
    </lineage>
</organism>
<dbReference type="EMBL" id="CP000487">
    <property type="protein sequence ID" value="ABK82398.1"/>
    <property type="molecule type" value="Genomic_DNA"/>
</dbReference>
<dbReference type="RefSeq" id="WP_002847988.1">
    <property type="nucleotide sequence ID" value="NC_008599.1"/>
</dbReference>
<dbReference type="SMR" id="A0RM24"/>
<dbReference type="KEGG" id="cff:CFF8240_0047"/>
<dbReference type="eggNOG" id="COG0199">
    <property type="taxonomic scope" value="Bacteria"/>
</dbReference>
<dbReference type="HOGENOM" id="CLU_139869_3_0_7"/>
<dbReference type="Proteomes" id="UP000000760">
    <property type="component" value="Chromosome"/>
</dbReference>
<dbReference type="GO" id="GO:0005737">
    <property type="term" value="C:cytoplasm"/>
    <property type="evidence" value="ECO:0007669"/>
    <property type="project" value="UniProtKB-ARBA"/>
</dbReference>
<dbReference type="GO" id="GO:0015935">
    <property type="term" value="C:small ribosomal subunit"/>
    <property type="evidence" value="ECO:0007669"/>
    <property type="project" value="TreeGrafter"/>
</dbReference>
<dbReference type="GO" id="GO:0019843">
    <property type="term" value="F:rRNA binding"/>
    <property type="evidence" value="ECO:0007669"/>
    <property type="project" value="UniProtKB-UniRule"/>
</dbReference>
<dbReference type="GO" id="GO:0003735">
    <property type="term" value="F:structural constituent of ribosome"/>
    <property type="evidence" value="ECO:0007669"/>
    <property type="project" value="InterPro"/>
</dbReference>
<dbReference type="GO" id="GO:0008270">
    <property type="term" value="F:zinc ion binding"/>
    <property type="evidence" value="ECO:0007669"/>
    <property type="project" value="UniProtKB-UniRule"/>
</dbReference>
<dbReference type="GO" id="GO:0006412">
    <property type="term" value="P:translation"/>
    <property type="evidence" value="ECO:0007669"/>
    <property type="project" value="UniProtKB-UniRule"/>
</dbReference>
<dbReference type="FunFam" id="4.10.830.10:FF:000001">
    <property type="entry name" value="30S ribosomal protein S14 type Z"/>
    <property type="match status" value="1"/>
</dbReference>
<dbReference type="Gene3D" id="4.10.830.10">
    <property type="entry name" value="30s Ribosomal Protein S14, Chain N"/>
    <property type="match status" value="1"/>
</dbReference>
<dbReference type="HAMAP" id="MF_01364_B">
    <property type="entry name" value="Ribosomal_uS14_2_B"/>
    <property type="match status" value="1"/>
</dbReference>
<dbReference type="InterPro" id="IPR001209">
    <property type="entry name" value="Ribosomal_uS14"/>
</dbReference>
<dbReference type="InterPro" id="IPR023053">
    <property type="entry name" value="Ribosomal_uS14_bact"/>
</dbReference>
<dbReference type="InterPro" id="IPR018271">
    <property type="entry name" value="Ribosomal_uS14_CS"/>
</dbReference>
<dbReference type="InterPro" id="IPR043140">
    <property type="entry name" value="Ribosomal_uS14_sf"/>
</dbReference>
<dbReference type="NCBIfam" id="NF005974">
    <property type="entry name" value="PRK08061.1"/>
    <property type="match status" value="1"/>
</dbReference>
<dbReference type="PANTHER" id="PTHR19836">
    <property type="entry name" value="30S RIBOSOMAL PROTEIN S14"/>
    <property type="match status" value="1"/>
</dbReference>
<dbReference type="PANTHER" id="PTHR19836:SF19">
    <property type="entry name" value="SMALL RIBOSOMAL SUBUNIT PROTEIN US14M"/>
    <property type="match status" value="1"/>
</dbReference>
<dbReference type="Pfam" id="PF00253">
    <property type="entry name" value="Ribosomal_S14"/>
    <property type="match status" value="1"/>
</dbReference>
<dbReference type="SUPFAM" id="SSF57716">
    <property type="entry name" value="Glucocorticoid receptor-like (DNA-binding domain)"/>
    <property type="match status" value="1"/>
</dbReference>
<dbReference type="PROSITE" id="PS00527">
    <property type="entry name" value="RIBOSOMAL_S14"/>
    <property type="match status" value="1"/>
</dbReference>
<comment type="function">
    <text evidence="1">Binds 16S rRNA, required for the assembly of 30S particles and may also be responsible for determining the conformation of the 16S rRNA at the A site.</text>
</comment>
<comment type="cofactor">
    <cofactor evidence="1">
        <name>Zn(2+)</name>
        <dbReference type="ChEBI" id="CHEBI:29105"/>
    </cofactor>
    <text evidence="1">Binds 1 zinc ion per subunit.</text>
</comment>
<comment type="subunit">
    <text evidence="1">Part of the 30S ribosomal subunit. Contacts proteins S3 and S10.</text>
</comment>
<comment type="similarity">
    <text evidence="1">Belongs to the universal ribosomal protein uS14 family. Zinc-binding uS14 subfamily.</text>
</comment>
<proteinExistence type="inferred from homology"/>
<feature type="chain" id="PRO_1000067930" description="Small ribosomal subunit protein uS14">
    <location>
        <begin position="1"/>
        <end position="61"/>
    </location>
</feature>
<feature type="binding site" evidence="1">
    <location>
        <position position="24"/>
    </location>
    <ligand>
        <name>Zn(2+)</name>
        <dbReference type="ChEBI" id="CHEBI:29105"/>
    </ligand>
</feature>
<feature type="binding site" evidence="1">
    <location>
        <position position="27"/>
    </location>
    <ligand>
        <name>Zn(2+)</name>
        <dbReference type="ChEBI" id="CHEBI:29105"/>
    </ligand>
</feature>
<feature type="binding site" evidence="1">
    <location>
        <position position="40"/>
    </location>
    <ligand>
        <name>Zn(2+)</name>
        <dbReference type="ChEBI" id="CHEBI:29105"/>
    </ligand>
</feature>
<feature type="binding site" evidence="1">
    <location>
        <position position="43"/>
    </location>
    <ligand>
        <name>Zn(2+)</name>
        <dbReference type="ChEBI" id="CHEBI:29105"/>
    </ligand>
</feature>
<gene>
    <name evidence="1" type="primary">rpsZ</name>
    <name evidence="1" type="synonym">rpsN</name>
    <name type="ordered locus">CFF8240_0047</name>
</gene>
<reference key="1">
    <citation type="submission" date="2006-11" db="EMBL/GenBank/DDBJ databases">
        <title>Sequence of Campylobacter fetus subsp. fetus 82-40.</title>
        <authorList>
            <person name="Fouts D.E."/>
            <person name="Nelson K.E."/>
        </authorList>
    </citation>
    <scope>NUCLEOTIDE SEQUENCE [LARGE SCALE GENOMIC DNA]</scope>
    <source>
        <strain>82-40</strain>
    </source>
</reference>
<evidence type="ECO:0000255" key="1">
    <source>
        <dbReference type="HAMAP-Rule" id="MF_01364"/>
    </source>
</evidence>
<evidence type="ECO:0000305" key="2"/>